<proteinExistence type="inferred from homology"/>
<protein>
    <recommendedName>
        <fullName evidence="1">UvrABC system protein C</fullName>
        <shortName evidence="1">Protein UvrC</shortName>
    </recommendedName>
    <alternativeName>
        <fullName evidence="1">Excinuclease ABC subunit C</fullName>
    </alternativeName>
</protein>
<feature type="chain" id="PRO_0000264968" description="UvrABC system protein C">
    <location>
        <begin position="1"/>
        <end position="601"/>
    </location>
</feature>
<feature type="domain" description="GIY-YIG" evidence="1">
    <location>
        <begin position="15"/>
        <end position="94"/>
    </location>
</feature>
<feature type="domain" description="UVR" evidence="1">
    <location>
        <begin position="202"/>
        <end position="237"/>
    </location>
</feature>
<gene>
    <name evidence="1" type="primary">uvrC</name>
    <name type="ordered locus">Swol_0254</name>
</gene>
<reference key="1">
    <citation type="journal article" date="2010" name="Environ. Microbiol.">
        <title>The genome of Syntrophomonas wolfei: new insights into syntrophic metabolism and biohydrogen production.</title>
        <authorList>
            <person name="Sieber J.R."/>
            <person name="Sims D.R."/>
            <person name="Han C."/>
            <person name="Kim E."/>
            <person name="Lykidis A."/>
            <person name="Lapidus A.L."/>
            <person name="McDonnald E."/>
            <person name="Rohlin L."/>
            <person name="Culley D.E."/>
            <person name="Gunsalus R."/>
            <person name="McInerney M.J."/>
        </authorList>
    </citation>
    <scope>NUCLEOTIDE SEQUENCE [LARGE SCALE GENOMIC DNA]</scope>
    <source>
        <strain>DSM 2245B / Goettingen</strain>
    </source>
</reference>
<sequence>MGDEMLKERLKKVPLQPGVYLFKNQEGQVLYVGKARVLRQRMRSYFQAPERMHPKVKAMMAWVSDFDFIVTHSEMEALILENNLIKSYKPRYNIDLRDDKSYPYIKVTVADKFPRVYLAREKKDGVSRYFGPYTDVTSLRDTLKLLNGVFGLRSCRTMKSRRRPCLNRDMGKCLSPCSGEISEEEYSQKVQALITFLEGDFQEIVREKEKEMAMAARSLEFEKAARLRDQIQSLRQLGEKQKIELASPYELDLVGMLSGEKENLVLVFKVRSGKIVGKDTFWLKRPIQEDENEAMEFFIKHYYDENPDIPPEILLSHLPSESKLVEAWLKSRVSHRVELRVPQRGEKKQVLNMLLENARLLLEEKQREENKQLAALSHLARVLDLEVVPNRLECFDVSHLAGEETVASMVVFVGGQPEKKAYRHFKIRTQQNNDTASLAETVRRRLENARQANPAFLPEPDLILVDGGLGQVNAVAAVLQEMNLDIPLFALAEKNEEIYRPGKSQPLVLAARDNGLQLLQRLRDEAHRFAIEYNRKRRAKKIRSSALDEIPGIGKQRKKNLLVHFTSVAKIKEASLDEIAAVPGMNRKAALAVIEFFHNQD</sequence>
<name>UVRC_SYNWW</name>
<keyword id="KW-0963">Cytoplasm</keyword>
<keyword id="KW-0227">DNA damage</keyword>
<keyword id="KW-0228">DNA excision</keyword>
<keyword id="KW-0234">DNA repair</keyword>
<keyword id="KW-0267">Excision nuclease</keyword>
<keyword id="KW-1185">Reference proteome</keyword>
<keyword id="KW-0742">SOS response</keyword>
<dbReference type="EMBL" id="CP000448">
    <property type="protein sequence ID" value="ABI67604.1"/>
    <property type="molecule type" value="Genomic_DNA"/>
</dbReference>
<dbReference type="RefSeq" id="WP_011639713.1">
    <property type="nucleotide sequence ID" value="NC_008346.1"/>
</dbReference>
<dbReference type="SMR" id="Q0B0A0"/>
<dbReference type="STRING" id="335541.Swol_0254"/>
<dbReference type="KEGG" id="swo:Swol_0254"/>
<dbReference type="eggNOG" id="COG0322">
    <property type="taxonomic scope" value="Bacteria"/>
</dbReference>
<dbReference type="HOGENOM" id="CLU_014841_3_2_9"/>
<dbReference type="OrthoDB" id="9804933at2"/>
<dbReference type="Proteomes" id="UP000001968">
    <property type="component" value="Chromosome"/>
</dbReference>
<dbReference type="GO" id="GO:0005737">
    <property type="term" value="C:cytoplasm"/>
    <property type="evidence" value="ECO:0007669"/>
    <property type="project" value="UniProtKB-SubCell"/>
</dbReference>
<dbReference type="GO" id="GO:0009380">
    <property type="term" value="C:excinuclease repair complex"/>
    <property type="evidence" value="ECO:0007669"/>
    <property type="project" value="InterPro"/>
</dbReference>
<dbReference type="GO" id="GO:0003677">
    <property type="term" value="F:DNA binding"/>
    <property type="evidence" value="ECO:0007669"/>
    <property type="project" value="UniProtKB-UniRule"/>
</dbReference>
<dbReference type="GO" id="GO:0009381">
    <property type="term" value="F:excinuclease ABC activity"/>
    <property type="evidence" value="ECO:0007669"/>
    <property type="project" value="UniProtKB-UniRule"/>
</dbReference>
<dbReference type="GO" id="GO:0006289">
    <property type="term" value="P:nucleotide-excision repair"/>
    <property type="evidence" value="ECO:0007669"/>
    <property type="project" value="UniProtKB-UniRule"/>
</dbReference>
<dbReference type="GO" id="GO:0009432">
    <property type="term" value="P:SOS response"/>
    <property type="evidence" value="ECO:0007669"/>
    <property type="project" value="UniProtKB-UniRule"/>
</dbReference>
<dbReference type="CDD" id="cd10434">
    <property type="entry name" value="GIY-YIG_UvrC_Cho"/>
    <property type="match status" value="1"/>
</dbReference>
<dbReference type="FunFam" id="3.40.1440.10:FF:000001">
    <property type="entry name" value="UvrABC system protein C"/>
    <property type="match status" value="1"/>
</dbReference>
<dbReference type="Gene3D" id="1.10.150.20">
    <property type="entry name" value="5' to 3' exonuclease, C-terminal subdomain"/>
    <property type="match status" value="1"/>
</dbReference>
<dbReference type="Gene3D" id="3.40.1440.10">
    <property type="entry name" value="GIY-YIG endonuclease"/>
    <property type="match status" value="1"/>
</dbReference>
<dbReference type="Gene3D" id="4.10.860.10">
    <property type="entry name" value="UVR domain"/>
    <property type="match status" value="1"/>
</dbReference>
<dbReference type="Gene3D" id="3.30.420.340">
    <property type="entry name" value="UvrC, RNAse H endonuclease domain"/>
    <property type="match status" value="1"/>
</dbReference>
<dbReference type="HAMAP" id="MF_00203">
    <property type="entry name" value="UvrC"/>
    <property type="match status" value="1"/>
</dbReference>
<dbReference type="InterPro" id="IPR000305">
    <property type="entry name" value="GIY-YIG_endonuc"/>
</dbReference>
<dbReference type="InterPro" id="IPR035901">
    <property type="entry name" value="GIY-YIG_endonuc_sf"/>
</dbReference>
<dbReference type="InterPro" id="IPR047296">
    <property type="entry name" value="GIY-YIG_UvrC_Cho"/>
</dbReference>
<dbReference type="InterPro" id="IPR003583">
    <property type="entry name" value="Hlx-hairpin-Hlx_DNA-bd_motif"/>
</dbReference>
<dbReference type="InterPro" id="IPR010994">
    <property type="entry name" value="RuvA_2-like"/>
</dbReference>
<dbReference type="InterPro" id="IPR001943">
    <property type="entry name" value="UVR_dom"/>
</dbReference>
<dbReference type="InterPro" id="IPR036876">
    <property type="entry name" value="UVR_dom_sf"/>
</dbReference>
<dbReference type="InterPro" id="IPR050066">
    <property type="entry name" value="UvrABC_protein_C"/>
</dbReference>
<dbReference type="InterPro" id="IPR004791">
    <property type="entry name" value="UvrC"/>
</dbReference>
<dbReference type="InterPro" id="IPR001162">
    <property type="entry name" value="UvrC_RNase_H_dom"/>
</dbReference>
<dbReference type="InterPro" id="IPR038476">
    <property type="entry name" value="UvrC_RNase_H_dom_sf"/>
</dbReference>
<dbReference type="NCBIfam" id="NF001824">
    <property type="entry name" value="PRK00558.1-5"/>
    <property type="match status" value="1"/>
</dbReference>
<dbReference type="NCBIfam" id="TIGR00194">
    <property type="entry name" value="uvrC"/>
    <property type="match status" value="1"/>
</dbReference>
<dbReference type="PANTHER" id="PTHR30562:SF1">
    <property type="entry name" value="UVRABC SYSTEM PROTEIN C"/>
    <property type="match status" value="1"/>
</dbReference>
<dbReference type="PANTHER" id="PTHR30562">
    <property type="entry name" value="UVRC/OXIDOREDUCTASE"/>
    <property type="match status" value="1"/>
</dbReference>
<dbReference type="Pfam" id="PF01541">
    <property type="entry name" value="GIY-YIG"/>
    <property type="match status" value="1"/>
</dbReference>
<dbReference type="Pfam" id="PF14520">
    <property type="entry name" value="HHH_5"/>
    <property type="match status" value="1"/>
</dbReference>
<dbReference type="Pfam" id="PF02151">
    <property type="entry name" value="UVR"/>
    <property type="match status" value="1"/>
</dbReference>
<dbReference type="Pfam" id="PF22920">
    <property type="entry name" value="UvrC_RNaseH"/>
    <property type="match status" value="1"/>
</dbReference>
<dbReference type="Pfam" id="PF08459">
    <property type="entry name" value="UvrC_RNaseH_dom"/>
    <property type="match status" value="1"/>
</dbReference>
<dbReference type="SMART" id="SM00465">
    <property type="entry name" value="GIYc"/>
    <property type="match status" value="1"/>
</dbReference>
<dbReference type="SMART" id="SM00278">
    <property type="entry name" value="HhH1"/>
    <property type="match status" value="2"/>
</dbReference>
<dbReference type="SUPFAM" id="SSF46600">
    <property type="entry name" value="C-terminal UvrC-binding domain of UvrB"/>
    <property type="match status" value="1"/>
</dbReference>
<dbReference type="SUPFAM" id="SSF82771">
    <property type="entry name" value="GIY-YIG endonuclease"/>
    <property type="match status" value="1"/>
</dbReference>
<dbReference type="SUPFAM" id="SSF47781">
    <property type="entry name" value="RuvA domain 2-like"/>
    <property type="match status" value="1"/>
</dbReference>
<dbReference type="PROSITE" id="PS50164">
    <property type="entry name" value="GIY_YIG"/>
    <property type="match status" value="1"/>
</dbReference>
<dbReference type="PROSITE" id="PS50151">
    <property type="entry name" value="UVR"/>
    <property type="match status" value="1"/>
</dbReference>
<dbReference type="PROSITE" id="PS50165">
    <property type="entry name" value="UVRC"/>
    <property type="match status" value="1"/>
</dbReference>
<accession>Q0B0A0</accession>
<evidence type="ECO:0000255" key="1">
    <source>
        <dbReference type="HAMAP-Rule" id="MF_00203"/>
    </source>
</evidence>
<comment type="function">
    <text evidence="1">The UvrABC repair system catalyzes the recognition and processing of DNA lesions. UvrC both incises the 5' and 3' sides of the lesion. The N-terminal half is responsible for the 3' incision and the C-terminal half is responsible for the 5' incision.</text>
</comment>
<comment type="subunit">
    <text evidence="1">Interacts with UvrB in an incision complex.</text>
</comment>
<comment type="subcellular location">
    <subcellularLocation>
        <location evidence="1">Cytoplasm</location>
    </subcellularLocation>
</comment>
<comment type="similarity">
    <text evidence="1">Belongs to the UvrC family.</text>
</comment>
<organism>
    <name type="scientific">Syntrophomonas wolfei subsp. wolfei (strain DSM 2245B / Goettingen)</name>
    <dbReference type="NCBI Taxonomy" id="335541"/>
    <lineage>
        <taxon>Bacteria</taxon>
        <taxon>Bacillati</taxon>
        <taxon>Bacillota</taxon>
        <taxon>Clostridia</taxon>
        <taxon>Eubacteriales</taxon>
        <taxon>Syntrophomonadaceae</taxon>
        <taxon>Syntrophomonas</taxon>
    </lineage>
</organism>